<dbReference type="EC" id="7.1.1.2"/>
<dbReference type="EMBL" id="AF406806">
    <property type="protein sequence ID" value="AAK97519.1"/>
    <property type="molecule type" value="Genomic_DNA"/>
</dbReference>
<dbReference type="RefSeq" id="NP_976098.1">
    <property type="nucleotide sequence ID" value="NC_005433.1"/>
</dbReference>
<dbReference type="SMR" id="Q94VK5"/>
<dbReference type="GeneID" id="2746479"/>
<dbReference type="CTD" id="4541"/>
<dbReference type="GO" id="GO:0031966">
    <property type="term" value="C:mitochondrial membrane"/>
    <property type="evidence" value="ECO:0007669"/>
    <property type="project" value="UniProtKB-SubCell"/>
</dbReference>
<dbReference type="GO" id="GO:0008137">
    <property type="term" value="F:NADH dehydrogenase (ubiquinone) activity"/>
    <property type="evidence" value="ECO:0007669"/>
    <property type="project" value="UniProtKB-EC"/>
</dbReference>
<dbReference type="Gene3D" id="1.20.120.1200">
    <property type="entry name" value="NADH-ubiquinone/plastoquinone oxidoreductase chain 6, subunit NuoJ"/>
    <property type="match status" value="1"/>
</dbReference>
<dbReference type="InterPro" id="IPR050269">
    <property type="entry name" value="ComplexI_Subunit6"/>
</dbReference>
<dbReference type="InterPro" id="IPR001457">
    <property type="entry name" value="NADH_UbQ/plastoQ_OxRdtase_su6"/>
</dbReference>
<dbReference type="InterPro" id="IPR042106">
    <property type="entry name" value="Nuo/plastoQ_OxRdtase_6_NuoJ"/>
</dbReference>
<dbReference type="PANTHER" id="PTHR11435">
    <property type="entry name" value="NADH UBIQUINONE OXIDOREDUCTASE SUBUNIT ND6"/>
    <property type="match status" value="1"/>
</dbReference>
<dbReference type="PANTHER" id="PTHR11435:SF1">
    <property type="entry name" value="NADH-UBIQUINONE OXIDOREDUCTASE CHAIN 6"/>
    <property type="match status" value="1"/>
</dbReference>
<dbReference type="Pfam" id="PF00499">
    <property type="entry name" value="Oxidored_q3"/>
    <property type="match status" value="1"/>
</dbReference>
<protein>
    <recommendedName>
        <fullName>NADH-ubiquinone oxidoreductase chain 6</fullName>
        <ecNumber>7.1.1.2</ecNumber>
    </recommendedName>
    <alternativeName>
        <fullName>NADH dehydrogenase subunit 6</fullName>
    </alternativeName>
</protein>
<keyword id="KW-0249">Electron transport</keyword>
<keyword id="KW-0472">Membrane</keyword>
<keyword id="KW-0496">Mitochondrion</keyword>
<keyword id="KW-0520">NAD</keyword>
<keyword id="KW-0679">Respiratory chain</keyword>
<keyword id="KW-1278">Translocase</keyword>
<keyword id="KW-0812">Transmembrane</keyword>
<keyword id="KW-1133">Transmembrane helix</keyword>
<keyword id="KW-0813">Transport</keyword>
<proteinExistence type="inferred from homology"/>
<gene>
    <name type="primary">MT-ND6</name>
    <name type="synonym">MTND6</name>
    <name type="synonym">NADH6</name>
    <name type="synonym">ND6</name>
</gene>
<sequence length="175" mass="18678">MMTYIVFILSTIFVISFVGFSSKPSPIYGGVGLIVSGGVGCGIVMSFGGSFLGLMVFLIYLGGMLVVFGYTTAMATEQYPEVWVSNKVVMGAFISGLIVEVVFVLCVLNSEELKGLFELNGMGDWVIYSVEDSGVFSKEVMGVAALYSYGVWLVIVTGWSLLIGVIVVLEVTRGG</sequence>
<evidence type="ECO:0000250" key="1"/>
<evidence type="ECO:0000255" key="2"/>
<evidence type="ECO:0000305" key="3"/>
<name>NU6M_RHIMO</name>
<comment type="function">
    <text evidence="1">Core subunit of the mitochondrial membrane respiratory chain NADH dehydrogenase (Complex I) that is believed to belong to the minimal assembly required for catalysis. Complex I functions in the transfer of electrons from NADH to the respiratory chain. The immediate electron acceptor for the enzyme is believed to be ubiquinone (By similarity).</text>
</comment>
<comment type="catalytic activity">
    <reaction>
        <text>a ubiquinone + NADH + 5 H(+)(in) = a ubiquinol + NAD(+) + 4 H(+)(out)</text>
        <dbReference type="Rhea" id="RHEA:29091"/>
        <dbReference type="Rhea" id="RHEA-COMP:9565"/>
        <dbReference type="Rhea" id="RHEA-COMP:9566"/>
        <dbReference type="ChEBI" id="CHEBI:15378"/>
        <dbReference type="ChEBI" id="CHEBI:16389"/>
        <dbReference type="ChEBI" id="CHEBI:17976"/>
        <dbReference type="ChEBI" id="CHEBI:57540"/>
        <dbReference type="ChEBI" id="CHEBI:57945"/>
        <dbReference type="EC" id="7.1.1.2"/>
    </reaction>
</comment>
<comment type="subcellular location">
    <subcellularLocation>
        <location evidence="3">Mitochondrion membrane</location>
        <topology evidence="3">Multi-pass membrane protein</topology>
    </subcellularLocation>
</comment>
<comment type="similarity">
    <text evidence="3">Belongs to the complex I subunit 6 family.</text>
</comment>
<geneLocation type="mitochondrion"/>
<accession>Q94VK5</accession>
<organism>
    <name type="scientific">Rhinolophus monoceros</name>
    <name type="common">Formosan lesser horseshoe bat</name>
    <dbReference type="NCBI Taxonomy" id="169756"/>
    <lineage>
        <taxon>Eukaryota</taxon>
        <taxon>Metazoa</taxon>
        <taxon>Chordata</taxon>
        <taxon>Craniata</taxon>
        <taxon>Vertebrata</taxon>
        <taxon>Euteleostomi</taxon>
        <taxon>Mammalia</taxon>
        <taxon>Eutheria</taxon>
        <taxon>Laurasiatheria</taxon>
        <taxon>Chiroptera</taxon>
        <taxon>Yinpterochiroptera</taxon>
        <taxon>Rhinolophoidea</taxon>
        <taxon>Rhinolophidae</taxon>
        <taxon>Rhinolophinae</taxon>
        <taxon>Rhinolophus</taxon>
    </lineage>
</organism>
<reference key="1">
    <citation type="journal article" date="2002" name="Mol. Biol. Evol.">
        <title>Four new mitochondrial genomes and the increased stability of evolutionary trees of mammals from improved taxon sampling.</title>
        <authorList>
            <person name="Lin Y.-H."/>
            <person name="McLenachan P.A."/>
            <person name="Gore A.R."/>
            <person name="Phillips M.J."/>
            <person name="Ota R."/>
            <person name="Hendy M.D."/>
            <person name="Penny D."/>
        </authorList>
    </citation>
    <scope>NUCLEOTIDE SEQUENCE [GENOMIC DNA]</scope>
</reference>
<feature type="chain" id="PRO_0000118327" description="NADH-ubiquinone oxidoreductase chain 6">
    <location>
        <begin position="1"/>
        <end position="175"/>
    </location>
</feature>
<feature type="transmembrane region" description="Helical" evidence="2">
    <location>
        <begin position="1"/>
        <end position="21"/>
    </location>
</feature>
<feature type="transmembrane region" description="Helical" evidence="2">
    <location>
        <begin position="25"/>
        <end position="45"/>
    </location>
</feature>
<feature type="transmembrane region" description="Helical" evidence="2">
    <location>
        <begin position="47"/>
        <end position="67"/>
    </location>
</feature>
<feature type="transmembrane region" description="Helical" evidence="2">
    <location>
        <begin position="88"/>
        <end position="108"/>
    </location>
</feature>
<feature type="transmembrane region" description="Helical" evidence="2">
    <location>
        <begin position="149"/>
        <end position="169"/>
    </location>
</feature>